<sequence length="72" mass="8301">MAKDDVIEIDGTVLEALPNANFKVELDNKHVILCHIAGKMRMHYIRIMPGDKVKVELTPYSLDKGRITFRYK</sequence>
<dbReference type="EMBL" id="CP000025">
    <property type="protein sequence ID" value="AAW36186.1"/>
    <property type="molecule type" value="Genomic_DNA"/>
</dbReference>
<dbReference type="RefSeq" id="WP_002781436.1">
    <property type="nucleotide sequence ID" value="NC_003912.7"/>
</dbReference>
<dbReference type="SMR" id="Q5HSK1"/>
<dbReference type="GeneID" id="98394725"/>
<dbReference type="KEGG" id="cjr:CJE1762"/>
<dbReference type="HOGENOM" id="CLU_151267_1_0_7"/>
<dbReference type="GO" id="GO:0005829">
    <property type="term" value="C:cytosol"/>
    <property type="evidence" value="ECO:0007669"/>
    <property type="project" value="TreeGrafter"/>
</dbReference>
<dbReference type="GO" id="GO:0043022">
    <property type="term" value="F:ribosome binding"/>
    <property type="evidence" value="ECO:0007669"/>
    <property type="project" value="UniProtKB-UniRule"/>
</dbReference>
<dbReference type="GO" id="GO:0019843">
    <property type="term" value="F:rRNA binding"/>
    <property type="evidence" value="ECO:0007669"/>
    <property type="project" value="UniProtKB-UniRule"/>
</dbReference>
<dbReference type="GO" id="GO:0003743">
    <property type="term" value="F:translation initiation factor activity"/>
    <property type="evidence" value="ECO:0007669"/>
    <property type="project" value="UniProtKB-UniRule"/>
</dbReference>
<dbReference type="CDD" id="cd04451">
    <property type="entry name" value="S1_IF1"/>
    <property type="match status" value="1"/>
</dbReference>
<dbReference type="FunFam" id="2.40.50.140:FF:000002">
    <property type="entry name" value="Translation initiation factor IF-1"/>
    <property type="match status" value="1"/>
</dbReference>
<dbReference type="Gene3D" id="2.40.50.140">
    <property type="entry name" value="Nucleic acid-binding proteins"/>
    <property type="match status" value="1"/>
</dbReference>
<dbReference type="HAMAP" id="MF_00075">
    <property type="entry name" value="IF_1"/>
    <property type="match status" value="1"/>
</dbReference>
<dbReference type="InterPro" id="IPR012340">
    <property type="entry name" value="NA-bd_OB-fold"/>
</dbReference>
<dbReference type="InterPro" id="IPR006196">
    <property type="entry name" value="RNA-binding_domain_S1_IF1"/>
</dbReference>
<dbReference type="InterPro" id="IPR003029">
    <property type="entry name" value="S1_domain"/>
</dbReference>
<dbReference type="InterPro" id="IPR004368">
    <property type="entry name" value="TIF_IF1"/>
</dbReference>
<dbReference type="NCBIfam" id="TIGR00008">
    <property type="entry name" value="infA"/>
    <property type="match status" value="1"/>
</dbReference>
<dbReference type="PANTHER" id="PTHR33370">
    <property type="entry name" value="TRANSLATION INITIATION FACTOR IF-1, CHLOROPLASTIC"/>
    <property type="match status" value="1"/>
</dbReference>
<dbReference type="PANTHER" id="PTHR33370:SF1">
    <property type="entry name" value="TRANSLATION INITIATION FACTOR IF-1, CHLOROPLASTIC"/>
    <property type="match status" value="1"/>
</dbReference>
<dbReference type="Pfam" id="PF01176">
    <property type="entry name" value="eIF-1a"/>
    <property type="match status" value="1"/>
</dbReference>
<dbReference type="SMART" id="SM00316">
    <property type="entry name" value="S1"/>
    <property type="match status" value="1"/>
</dbReference>
<dbReference type="SUPFAM" id="SSF50249">
    <property type="entry name" value="Nucleic acid-binding proteins"/>
    <property type="match status" value="1"/>
</dbReference>
<dbReference type="PROSITE" id="PS50832">
    <property type="entry name" value="S1_IF1_TYPE"/>
    <property type="match status" value="1"/>
</dbReference>
<proteinExistence type="inferred from homology"/>
<feature type="chain" id="PRO_0000095764" description="Translation initiation factor IF-1">
    <location>
        <begin position="1"/>
        <end position="72"/>
    </location>
</feature>
<feature type="domain" description="S1-like" evidence="1">
    <location>
        <begin position="1"/>
        <end position="72"/>
    </location>
</feature>
<protein>
    <recommendedName>
        <fullName evidence="1">Translation initiation factor IF-1</fullName>
    </recommendedName>
</protein>
<name>IF1_CAMJR</name>
<accession>Q5HSK1</accession>
<reference key="1">
    <citation type="journal article" date="2005" name="PLoS Biol.">
        <title>Major structural differences and novel potential virulence mechanisms from the genomes of multiple Campylobacter species.</title>
        <authorList>
            <person name="Fouts D.E."/>
            <person name="Mongodin E.F."/>
            <person name="Mandrell R.E."/>
            <person name="Miller W.G."/>
            <person name="Rasko D.A."/>
            <person name="Ravel J."/>
            <person name="Brinkac L.M."/>
            <person name="DeBoy R.T."/>
            <person name="Parker C.T."/>
            <person name="Daugherty S.C."/>
            <person name="Dodson R.J."/>
            <person name="Durkin A.S."/>
            <person name="Madupu R."/>
            <person name="Sullivan S.A."/>
            <person name="Shetty J.U."/>
            <person name="Ayodeji M.A."/>
            <person name="Shvartsbeyn A."/>
            <person name="Schatz M.C."/>
            <person name="Badger J.H."/>
            <person name="Fraser C.M."/>
            <person name="Nelson K.E."/>
        </authorList>
    </citation>
    <scope>NUCLEOTIDE SEQUENCE [LARGE SCALE GENOMIC DNA]</scope>
    <source>
        <strain>RM1221</strain>
    </source>
</reference>
<comment type="function">
    <text evidence="1">One of the essential components for the initiation of protein synthesis. Stabilizes the binding of IF-2 and IF-3 on the 30S subunit to which N-formylmethionyl-tRNA(fMet) subsequently binds. Helps modulate mRNA selection, yielding the 30S pre-initiation complex (PIC). Upon addition of the 50S ribosomal subunit IF-1, IF-2 and IF-3 are released leaving the mature 70S translation initiation complex.</text>
</comment>
<comment type="subunit">
    <text evidence="1">Component of the 30S ribosomal translation pre-initiation complex which assembles on the 30S ribosome in the order IF-2 and IF-3, IF-1 and N-formylmethionyl-tRNA(fMet); mRNA recruitment can occur at any time during PIC assembly.</text>
</comment>
<comment type="subcellular location">
    <subcellularLocation>
        <location evidence="1">Cytoplasm</location>
    </subcellularLocation>
</comment>
<comment type="similarity">
    <text evidence="1">Belongs to the IF-1 family.</text>
</comment>
<gene>
    <name evidence="1" type="primary">infA</name>
    <name type="ordered locus">CJE1762</name>
</gene>
<evidence type="ECO:0000255" key="1">
    <source>
        <dbReference type="HAMAP-Rule" id="MF_00075"/>
    </source>
</evidence>
<organism>
    <name type="scientific">Campylobacter jejuni (strain RM1221)</name>
    <dbReference type="NCBI Taxonomy" id="195099"/>
    <lineage>
        <taxon>Bacteria</taxon>
        <taxon>Pseudomonadati</taxon>
        <taxon>Campylobacterota</taxon>
        <taxon>Epsilonproteobacteria</taxon>
        <taxon>Campylobacterales</taxon>
        <taxon>Campylobacteraceae</taxon>
        <taxon>Campylobacter</taxon>
    </lineage>
</organism>
<keyword id="KW-0963">Cytoplasm</keyword>
<keyword id="KW-0396">Initiation factor</keyword>
<keyword id="KW-0648">Protein biosynthesis</keyword>
<keyword id="KW-0694">RNA-binding</keyword>
<keyword id="KW-0699">rRNA-binding</keyword>